<organism>
    <name type="scientific">Francisella philomiragia subsp. philomiragia (strain ATCC 25017 / CCUG 19701 / FSC 153 / O#319-036)</name>
    <dbReference type="NCBI Taxonomy" id="484022"/>
    <lineage>
        <taxon>Bacteria</taxon>
        <taxon>Pseudomonadati</taxon>
        <taxon>Pseudomonadota</taxon>
        <taxon>Gammaproteobacteria</taxon>
        <taxon>Thiotrichales</taxon>
        <taxon>Francisellaceae</taxon>
        <taxon>Francisella</taxon>
    </lineage>
</organism>
<comment type="function">
    <text evidence="1">Cell wall formation. Catalyzes the addition of glutamate to the nucleotide precursor UDP-N-acetylmuramoyl-L-alanine (UMA).</text>
</comment>
<comment type="catalytic activity">
    <reaction evidence="1">
        <text>UDP-N-acetyl-alpha-D-muramoyl-L-alanine + D-glutamate + ATP = UDP-N-acetyl-alpha-D-muramoyl-L-alanyl-D-glutamate + ADP + phosphate + H(+)</text>
        <dbReference type="Rhea" id="RHEA:16429"/>
        <dbReference type="ChEBI" id="CHEBI:15378"/>
        <dbReference type="ChEBI" id="CHEBI:29986"/>
        <dbReference type="ChEBI" id="CHEBI:30616"/>
        <dbReference type="ChEBI" id="CHEBI:43474"/>
        <dbReference type="ChEBI" id="CHEBI:83898"/>
        <dbReference type="ChEBI" id="CHEBI:83900"/>
        <dbReference type="ChEBI" id="CHEBI:456216"/>
        <dbReference type="EC" id="6.3.2.9"/>
    </reaction>
</comment>
<comment type="pathway">
    <text evidence="1">Cell wall biogenesis; peptidoglycan biosynthesis.</text>
</comment>
<comment type="subcellular location">
    <subcellularLocation>
        <location evidence="1">Cytoplasm</location>
    </subcellularLocation>
</comment>
<comment type="similarity">
    <text evidence="1">Belongs to the MurCDEF family.</text>
</comment>
<dbReference type="EC" id="6.3.2.9" evidence="1"/>
<dbReference type="EMBL" id="CP000937">
    <property type="protein sequence ID" value="ABZ86511.1"/>
    <property type="molecule type" value="Genomic_DNA"/>
</dbReference>
<dbReference type="SMR" id="B0TZ72"/>
<dbReference type="KEGG" id="fph:Fphi_0295"/>
<dbReference type="eggNOG" id="COG0771">
    <property type="taxonomic scope" value="Bacteria"/>
</dbReference>
<dbReference type="HOGENOM" id="CLU_032540_1_0_6"/>
<dbReference type="UniPathway" id="UPA00219"/>
<dbReference type="GO" id="GO:0005737">
    <property type="term" value="C:cytoplasm"/>
    <property type="evidence" value="ECO:0007669"/>
    <property type="project" value="UniProtKB-SubCell"/>
</dbReference>
<dbReference type="GO" id="GO:0005524">
    <property type="term" value="F:ATP binding"/>
    <property type="evidence" value="ECO:0007669"/>
    <property type="project" value="UniProtKB-UniRule"/>
</dbReference>
<dbReference type="GO" id="GO:0008764">
    <property type="term" value="F:UDP-N-acetylmuramoylalanine-D-glutamate ligase activity"/>
    <property type="evidence" value="ECO:0007669"/>
    <property type="project" value="UniProtKB-UniRule"/>
</dbReference>
<dbReference type="GO" id="GO:0051301">
    <property type="term" value="P:cell division"/>
    <property type="evidence" value="ECO:0007669"/>
    <property type="project" value="UniProtKB-KW"/>
</dbReference>
<dbReference type="GO" id="GO:0071555">
    <property type="term" value="P:cell wall organization"/>
    <property type="evidence" value="ECO:0007669"/>
    <property type="project" value="UniProtKB-KW"/>
</dbReference>
<dbReference type="GO" id="GO:0009252">
    <property type="term" value="P:peptidoglycan biosynthetic process"/>
    <property type="evidence" value="ECO:0007669"/>
    <property type="project" value="UniProtKB-UniRule"/>
</dbReference>
<dbReference type="GO" id="GO:0008360">
    <property type="term" value="P:regulation of cell shape"/>
    <property type="evidence" value="ECO:0007669"/>
    <property type="project" value="UniProtKB-KW"/>
</dbReference>
<dbReference type="Gene3D" id="3.90.190.20">
    <property type="entry name" value="Mur ligase, C-terminal domain"/>
    <property type="match status" value="1"/>
</dbReference>
<dbReference type="Gene3D" id="3.40.1190.10">
    <property type="entry name" value="Mur-like, catalytic domain"/>
    <property type="match status" value="1"/>
</dbReference>
<dbReference type="HAMAP" id="MF_00639">
    <property type="entry name" value="MurD"/>
    <property type="match status" value="1"/>
</dbReference>
<dbReference type="InterPro" id="IPR036565">
    <property type="entry name" value="Mur-like_cat_sf"/>
</dbReference>
<dbReference type="InterPro" id="IPR004101">
    <property type="entry name" value="Mur_ligase_C"/>
</dbReference>
<dbReference type="InterPro" id="IPR036615">
    <property type="entry name" value="Mur_ligase_C_dom_sf"/>
</dbReference>
<dbReference type="InterPro" id="IPR013221">
    <property type="entry name" value="Mur_ligase_cen"/>
</dbReference>
<dbReference type="InterPro" id="IPR005762">
    <property type="entry name" value="MurD"/>
</dbReference>
<dbReference type="NCBIfam" id="TIGR01087">
    <property type="entry name" value="murD"/>
    <property type="match status" value="1"/>
</dbReference>
<dbReference type="PANTHER" id="PTHR43692">
    <property type="entry name" value="UDP-N-ACETYLMURAMOYLALANINE--D-GLUTAMATE LIGASE"/>
    <property type="match status" value="1"/>
</dbReference>
<dbReference type="PANTHER" id="PTHR43692:SF1">
    <property type="entry name" value="UDP-N-ACETYLMURAMOYLALANINE--D-GLUTAMATE LIGASE"/>
    <property type="match status" value="1"/>
</dbReference>
<dbReference type="Pfam" id="PF02875">
    <property type="entry name" value="Mur_ligase_C"/>
    <property type="match status" value="1"/>
</dbReference>
<dbReference type="Pfam" id="PF08245">
    <property type="entry name" value="Mur_ligase_M"/>
    <property type="match status" value="1"/>
</dbReference>
<dbReference type="SUPFAM" id="SSF53623">
    <property type="entry name" value="MurD-like peptide ligases, catalytic domain"/>
    <property type="match status" value="1"/>
</dbReference>
<dbReference type="SUPFAM" id="SSF53244">
    <property type="entry name" value="MurD-like peptide ligases, peptide-binding domain"/>
    <property type="match status" value="1"/>
</dbReference>
<reference key="1">
    <citation type="submission" date="2007-12" db="EMBL/GenBank/DDBJ databases">
        <title>Complete sequence of chromosome of Francisella philomiragia subsp. philomiragia ATCC 25017.</title>
        <authorList>
            <consortium name="US DOE Joint Genome Institute"/>
            <person name="Copeland A."/>
            <person name="Lucas S."/>
            <person name="Lapidus A."/>
            <person name="Barry K."/>
            <person name="Detter J.C."/>
            <person name="Glavina del Rio T."/>
            <person name="Hammon N."/>
            <person name="Israni S."/>
            <person name="Dalin E."/>
            <person name="Tice H."/>
            <person name="Pitluck S."/>
            <person name="Chain P."/>
            <person name="Malfatti S."/>
            <person name="Shin M."/>
            <person name="Vergez L."/>
            <person name="Schmutz J."/>
            <person name="Larimer F."/>
            <person name="Land M."/>
            <person name="Hauser L."/>
            <person name="Richardson P."/>
        </authorList>
    </citation>
    <scope>NUCLEOTIDE SEQUENCE [LARGE SCALE GENOMIC DNA]</scope>
    <source>
        <strain>ATCC 25017 / CCUG 19701 / FSC 153 / O#319-036</strain>
    </source>
</reference>
<keyword id="KW-0067">ATP-binding</keyword>
<keyword id="KW-0131">Cell cycle</keyword>
<keyword id="KW-0132">Cell division</keyword>
<keyword id="KW-0133">Cell shape</keyword>
<keyword id="KW-0961">Cell wall biogenesis/degradation</keyword>
<keyword id="KW-0963">Cytoplasm</keyword>
<keyword id="KW-0436">Ligase</keyword>
<keyword id="KW-0547">Nucleotide-binding</keyword>
<keyword id="KW-0573">Peptidoglycan synthesis</keyword>
<gene>
    <name evidence="1" type="primary">murD</name>
    <name type="ordered locus">Fphi_0295</name>
</gene>
<proteinExistence type="inferred from homology"/>
<feature type="chain" id="PRO_1000082685" description="UDP-N-acetylmuramoylalanine--D-glutamate ligase">
    <location>
        <begin position="1"/>
        <end position="414"/>
    </location>
</feature>
<feature type="binding site" evidence="1">
    <location>
        <begin position="104"/>
        <end position="110"/>
    </location>
    <ligand>
        <name>ATP</name>
        <dbReference type="ChEBI" id="CHEBI:30616"/>
    </ligand>
</feature>
<name>MURD_FRAP2</name>
<evidence type="ECO:0000255" key="1">
    <source>
        <dbReference type="HAMAP-Rule" id="MF_00639"/>
    </source>
</evidence>
<sequence length="414" mass="46588">MFSFYFDNKKISKLLMVGYGSTGKSVCDFLANFIDLSVDISQNDDDFINCDLEQYDLITVSPGIPLNKSPYRVLSKFKQKIVSDIDLFYQSIRNTKAKMIAVTGSNGKSTIVTMLDFVLRDMGYKSILVGNIGTPPLNKIGEKFDYCVVEVSSFQIDLFNSVEFDLGCVVNVSLDHLDRYKNYEEYKQSKLNLAKFSKDFFVYDVHNTGIKYAGEYQIVRGSIYKDTTKLLDITETNLFGEHNLENIIVVLNIFDRFGIDISKAVAAIKKFKGLKHRCEIVKNIAGVTYINDSKGTNVGATIAALNSITSSKNIILLLGGVAKGGDFSLMSKSLAKYVKYVYLYGQDKEYIENYIKDMCRYQICNDMKDAFRLASQKAQDSEIVLLSPACASFDEFSGYAERGEVFEKLVAELK</sequence>
<accession>B0TZ72</accession>
<protein>
    <recommendedName>
        <fullName evidence="1">UDP-N-acetylmuramoylalanine--D-glutamate ligase</fullName>
        <ecNumber evidence="1">6.3.2.9</ecNumber>
    </recommendedName>
    <alternativeName>
        <fullName evidence="1">D-glutamic acid-adding enzyme</fullName>
    </alternativeName>
    <alternativeName>
        <fullName evidence="1">UDP-N-acetylmuramoyl-L-alanyl-D-glutamate synthetase</fullName>
    </alternativeName>
</protein>